<proteinExistence type="evidence at transcript level"/>
<reference key="1">
    <citation type="journal article" date="2000" name="Gene">
        <title>Expression of the chloroplast-localized small heat shock protein by oxidative stress in rice.</title>
        <authorList>
            <person name="Lee B.-H."/>
            <person name="Won S.-H."/>
            <person name="Lee H.-S."/>
            <person name="Miyao M."/>
            <person name="Chung W.-I."/>
            <person name="Kim I.-J."/>
            <person name="Jo J."/>
        </authorList>
    </citation>
    <scope>NUCLEOTIDE SEQUENCE [MRNA]</scope>
    <source>
        <tissue>Green leaf</tissue>
    </source>
</reference>
<reference key="2">
    <citation type="journal article" date="2005" name="Genome Res.">
        <title>Sequence, annotation, and analysis of synteny between rice chromosome 3 and diverged grass species.</title>
        <authorList>
            <consortium name="The rice chromosome 3 sequencing consortium"/>
            <person name="Buell C.R."/>
            <person name="Yuan Q."/>
            <person name="Ouyang S."/>
            <person name="Liu J."/>
            <person name="Zhu W."/>
            <person name="Wang A."/>
            <person name="Maiti R."/>
            <person name="Haas B."/>
            <person name="Wortman J."/>
            <person name="Pertea M."/>
            <person name="Jones K.M."/>
            <person name="Kim M."/>
            <person name="Overton L."/>
            <person name="Tsitrin T."/>
            <person name="Fadrosh D."/>
            <person name="Bera J."/>
            <person name="Weaver B."/>
            <person name="Jin S."/>
            <person name="Johri S."/>
            <person name="Reardon M."/>
            <person name="Webb K."/>
            <person name="Hill J."/>
            <person name="Moffat K."/>
            <person name="Tallon L."/>
            <person name="Van Aken S."/>
            <person name="Lewis M."/>
            <person name="Utterback T."/>
            <person name="Feldblyum T."/>
            <person name="Zismann V."/>
            <person name="Iobst S."/>
            <person name="Hsiao J."/>
            <person name="de Vazeille A.R."/>
            <person name="Salzberg S.L."/>
            <person name="White O."/>
            <person name="Fraser C.M."/>
            <person name="Yu Y."/>
            <person name="Kim H."/>
            <person name="Rambo T."/>
            <person name="Currie J."/>
            <person name="Collura K."/>
            <person name="Kernodle-Thompson S."/>
            <person name="Wei F."/>
            <person name="Kudrna K."/>
            <person name="Ammiraju J.S.S."/>
            <person name="Luo M."/>
            <person name="Goicoechea J.L."/>
            <person name="Wing R.A."/>
            <person name="Henry D."/>
            <person name="Oates R."/>
            <person name="Palmer M."/>
            <person name="Pries G."/>
            <person name="Saski C."/>
            <person name="Simmons J."/>
            <person name="Soderlund C."/>
            <person name="Nelson W."/>
            <person name="de la Bastide M."/>
            <person name="Spiegel L."/>
            <person name="Nascimento L."/>
            <person name="Huang E."/>
            <person name="Preston R."/>
            <person name="Zutavern T."/>
            <person name="Palmer L."/>
            <person name="O'Shaughnessy A."/>
            <person name="Dike S."/>
            <person name="McCombie W.R."/>
            <person name="Minx P."/>
            <person name="Cordum H."/>
            <person name="Wilson R."/>
            <person name="Jin W."/>
            <person name="Lee H.R."/>
            <person name="Jiang J."/>
            <person name="Jackson S."/>
        </authorList>
    </citation>
    <scope>NUCLEOTIDE SEQUENCE [LARGE SCALE GENOMIC DNA]</scope>
    <source>
        <strain>cv. Nipponbare</strain>
    </source>
</reference>
<reference key="3">
    <citation type="journal article" date="2005" name="Nature">
        <title>The map-based sequence of the rice genome.</title>
        <authorList>
            <consortium name="International rice genome sequencing project (IRGSP)"/>
        </authorList>
    </citation>
    <scope>NUCLEOTIDE SEQUENCE [LARGE SCALE GENOMIC DNA]</scope>
    <source>
        <strain>cv. Nipponbare</strain>
    </source>
</reference>
<reference key="4">
    <citation type="journal article" date="2008" name="Nucleic Acids Res.">
        <title>The rice annotation project database (RAP-DB): 2008 update.</title>
        <authorList>
            <consortium name="The rice annotation project (RAP)"/>
        </authorList>
    </citation>
    <scope>GENOME REANNOTATION</scope>
    <source>
        <strain>cv. Nipponbare</strain>
    </source>
</reference>
<reference key="5">
    <citation type="journal article" date="2013" name="Rice">
        <title>Improvement of the Oryza sativa Nipponbare reference genome using next generation sequence and optical map data.</title>
        <authorList>
            <person name="Kawahara Y."/>
            <person name="de la Bastide M."/>
            <person name="Hamilton J.P."/>
            <person name="Kanamori H."/>
            <person name="McCombie W.R."/>
            <person name="Ouyang S."/>
            <person name="Schwartz D.C."/>
            <person name="Tanaka T."/>
            <person name="Wu J."/>
            <person name="Zhou S."/>
            <person name="Childs K.L."/>
            <person name="Davidson R.M."/>
            <person name="Lin H."/>
            <person name="Quesada-Ocampo L."/>
            <person name="Vaillancourt B."/>
            <person name="Sakai H."/>
            <person name="Lee S.S."/>
            <person name="Kim J."/>
            <person name="Numa H."/>
            <person name="Itoh T."/>
            <person name="Buell C.R."/>
            <person name="Matsumoto T."/>
        </authorList>
    </citation>
    <scope>GENOME REANNOTATION</scope>
    <source>
        <strain>cv. Nipponbare</strain>
    </source>
</reference>
<reference key="6">
    <citation type="journal article" date="2005" name="PLoS Biol.">
        <title>The genomes of Oryza sativa: a history of duplications.</title>
        <authorList>
            <person name="Yu J."/>
            <person name="Wang J."/>
            <person name="Lin W."/>
            <person name="Li S."/>
            <person name="Li H."/>
            <person name="Zhou J."/>
            <person name="Ni P."/>
            <person name="Dong W."/>
            <person name="Hu S."/>
            <person name="Zeng C."/>
            <person name="Zhang J."/>
            <person name="Zhang Y."/>
            <person name="Li R."/>
            <person name="Xu Z."/>
            <person name="Li S."/>
            <person name="Li X."/>
            <person name="Zheng H."/>
            <person name="Cong L."/>
            <person name="Lin L."/>
            <person name="Yin J."/>
            <person name="Geng J."/>
            <person name="Li G."/>
            <person name="Shi J."/>
            <person name="Liu J."/>
            <person name="Lv H."/>
            <person name="Li J."/>
            <person name="Wang J."/>
            <person name="Deng Y."/>
            <person name="Ran L."/>
            <person name="Shi X."/>
            <person name="Wang X."/>
            <person name="Wu Q."/>
            <person name="Li C."/>
            <person name="Ren X."/>
            <person name="Wang J."/>
            <person name="Wang X."/>
            <person name="Li D."/>
            <person name="Liu D."/>
            <person name="Zhang X."/>
            <person name="Ji Z."/>
            <person name="Zhao W."/>
            <person name="Sun Y."/>
            <person name="Zhang Z."/>
            <person name="Bao J."/>
            <person name="Han Y."/>
            <person name="Dong L."/>
            <person name="Ji J."/>
            <person name="Chen P."/>
            <person name="Wu S."/>
            <person name="Liu J."/>
            <person name="Xiao Y."/>
            <person name="Bu D."/>
            <person name="Tan J."/>
            <person name="Yang L."/>
            <person name="Ye C."/>
            <person name="Zhang J."/>
            <person name="Xu J."/>
            <person name="Zhou Y."/>
            <person name="Yu Y."/>
            <person name="Zhang B."/>
            <person name="Zhuang S."/>
            <person name="Wei H."/>
            <person name="Liu B."/>
            <person name="Lei M."/>
            <person name="Yu H."/>
            <person name="Li Y."/>
            <person name="Xu H."/>
            <person name="Wei S."/>
            <person name="He X."/>
            <person name="Fang L."/>
            <person name="Zhang Z."/>
            <person name="Zhang Y."/>
            <person name="Huang X."/>
            <person name="Su Z."/>
            <person name="Tong W."/>
            <person name="Li J."/>
            <person name="Tong Z."/>
            <person name="Li S."/>
            <person name="Ye J."/>
            <person name="Wang L."/>
            <person name="Fang L."/>
            <person name="Lei T."/>
            <person name="Chen C.-S."/>
            <person name="Chen H.-C."/>
            <person name="Xu Z."/>
            <person name="Li H."/>
            <person name="Huang H."/>
            <person name="Zhang F."/>
            <person name="Xu H."/>
            <person name="Li N."/>
            <person name="Zhao C."/>
            <person name="Li S."/>
            <person name="Dong L."/>
            <person name="Huang Y."/>
            <person name="Li L."/>
            <person name="Xi Y."/>
            <person name="Qi Q."/>
            <person name="Li W."/>
            <person name="Zhang B."/>
            <person name="Hu W."/>
            <person name="Zhang Y."/>
            <person name="Tian X."/>
            <person name="Jiao Y."/>
            <person name="Liang X."/>
            <person name="Jin J."/>
            <person name="Gao L."/>
            <person name="Zheng W."/>
            <person name="Hao B."/>
            <person name="Liu S.-M."/>
            <person name="Wang W."/>
            <person name="Yuan L."/>
            <person name="Cao M."/>
            <person name="McDermott J."/>
            <person name="Samudrala R."/>
            <person name="Wang J."/>
            <person name="Wong G.K.-S."/>
            <person name="Yang H."/>
        </authorList>
    </citation>
    <scope>NUCLEOTIDE SEQUENCE [LARGE SCALE GENOMIC DNA]</scope>
    <source>
        <strain>cv. Nipponbare</strain>
    </source>
</reference>
<reference key="7">
    <citation type="journal article" date="2003" name="Science">
        <title>Collection, mapping, and annotation of over 28,000 cDNA clones from japonica rice.</title>
        <authorList>
            <consortium name="The rice full-length cDNA consortium"/>
        </authorList>
    </citation>
    <scope>NUCLEOTIDE SEQUENCE [LARGE SCALE MRNA]</scope>
    <source>
        <strain>cv. Nipponbare</strain>
    </source>
</reference>
<reference key="8">
    <citation type="journal article" date="2009" name="J. Plant Physiol.">
        <title>Expression analysis of nine rice heat shock protein genes under abiotic stresses and ABA treatment.</title>
        <authorList>
            <person name="Zou J."/>
            <person name="Liu A."/>
            <person name="Chen X."/>
            <person name="Zhou X."/>
            <person name="Gao G."/>
            <person name="Wang W."/>
            <person name="Zhang X."/>
        </authorList>
    </citation>
    <scope>TISSUE SPECIFICITY</scope>
    <scope>INDUCTION</scope>
</reference>
<reference key="9">
    <citation type="journal article" date="2009" name="BMC Genomics">
        <title>Rice sHsp genes: genomic organization and expression profiling under stress and development.</title>
        <authorList>
            <person name="Sarkar N.K."/>
            <person name="Kim Y.-K."/>
            <person name="Grover A."/>
        </authorList>
    </citation>
    <scope>INDUCTION</scope>
    <scope>GENE FAMILY</scope>
</reference>
<comment type="subunit">
    <text>May form oligomeric structures.</text>
</comment>
<comment type="subcellular location">
    <subcellularLocation>
        <location evidence="6">Plastid</location>
        <location evidence="6">Chloroplast</location>
    </subcellularLocation>
</comment>
<comment type="tissue specificity">
    <text evidence="4">Expressed in roots, stems, leaves, spikelets and embryos.</text>
</comment>
<comment type="induction">
    <text evidence="4 5">By heat shock.</text>
</comment>
<comment type="similarity">
    <text evidence="2">Belongs to the small heat shock protein (HSP20) family.</text>
</comment>
<protein>
    <recommendedName>
        <fullName>26.7 kDa heat shock protein, chloroplastic</fullName>
        <shortName>OsHsp26.7</shortName>
    </recommendedName>
</protein>
<name>HS26P_ORYSJ</name>
<keyword id="KW-0150">Chloroplast</keyword>
<keyword id="KW-0934">Plastid</keyword>
<keyword id="KW-1185">Reference proteome</keyword>
<keyword id="KW-0346">Stress response</keyword>
<keyword id="KW-0809">Transit peptide</keyword>
<feature type="transit peptide" description="Chloroplast" evidence="1">
    <location>
        <begin position="1"/>
        <end position="43"/>
    </location>
</feature>
<feature type="chain" id="PRO_0000387482" description="26.7 kDa heat shock protein, chloroplastic">
    <location>
        <begin position="44"/>
        <end position="240"/>
    </location>
</feature>
<feature type="domain" description="sHSP" evidence="2">
    <location>
        <begin position="126"/>
        <end position="240"/>
    </location>
</feature>
<feature type="region of interest" description="Disordered" evidence="3">
    <location>
        <begin position="59"/>
        <end position="84"/>
    </location>
</feature>
<feature type="sequence conflict" description="In Ref. 1; BAA78385." evidence="6" ref="1">
    <original>RAR</original>
    <variation>SE</variation>
    <location>
        <begin position="25"/>
        <end position="27"/>
    </location>
</feature>
<feature type="sequence conflict" description="In Ref. 1; BAA78385." evidence="6" ref="1">
    <original>LDGIS</original>
    <variation>FGRHL</variation>
    <location>
        <begin position="82"/>
        <end position="86"/>
    </location>
</feature>
<feature type="sequence conflict" description="In Ref. 1; BAA78385." evidence="6" ref="1">
    <original>I</original>
    <variation>M</variation>
    <location>
        <position position="110"/>
    </location>
</feature>
<accession>Q10P60</accession>
<accession>A0A0N7KGX6</accession>
<accession>Q9SXP6</accession>
<organism>
    <name type="scientific">Oryza sativa subsp. japonica</name>
    <name type="common">Rice</name>
    <dbReference type="NCBI Taxonomy" id="39947"/>
    <lineage>
        <taxon>Eukaryota</taxon>
        <taxon>Viridiplantae</taxon>
        <taxon>Streptophyta</taxon>
        <taxon>Embryophyta</taxon>
        <taxon>Tracheophyta</taxon>
        <taxon>Spermatophyta</taxon>
        <taxon>Magnoliopsida</taxon>
        <taxon>Liliopsida</taxon>
        <taxon>Poales</taxon>
        <taxon>Poaceae</taxon>
        <taxon>BOP clade</taxon>
        <taxon>Oryzoideae</taxon>
        <taxon>Oryzeae</taxon>
        <taxon>Oryzinae</taxon>
        <taxon>Oryza</taxon>
        <taxon>Oryza sativa</taxon>
    </lineage>
</organism>
<evidence type="ECO:0000255" key="1"/>
<evidence type="ECO:0000255" key="2">
    <source>
        <dbReference type="PROSITE-ProRule" id="PRU00285"/>
    </source>
</evidence>
<evidence type="ECO:0000256" key="3">
    <source>
        <dbReference type="SAM" id="MobiDB-lite"/>
    </source>
</evidence>
<evidence type="ECO:0000269" key="4">
    <source>
    </source>
</evidence>
<evidence type="ECO:0000269" key="5">
    <source>
    </source>
</evidence>
<evidence type="ECO:0000305" key="6"/>
<sequence>MAAPFALVSRVSPAARLPIRAAWRRARPTVGLPSSGRARQLAVASAAQENRDNTAVDVHVNQDGGNQQGNAVQRRPRRSSALDGISPFGLVDPMSPMRTMRQMLDTMDRIFDDVALGFPATPRRSLATGEVRMPWDVMEDDKEVRMRFDMPGLSREEVKVMVEDDALVIRGEHKKEEGEGAEGSGDGWWKERSVSSYDMRLALPDECDKSKVRAELKNGVLLVTVPKTEVERKVIDVQVQ</sequence>
<gene>
    <name type="primary">HSP26.7</name>
    <name type="ordered locus">Os03g0245800</name>
    <name type="ordered locus">LOC_Os03g14180</name>
    <name type="ORF">OsJ_10121</name>
</gene>
<dbReference type="EMBL" id="AB020973">
    <property type="protein sequence ID" value="BAA78385.1"/>
    <property type="molecule type" value="mRNA"/>
</dbReference>
<dbReference type="EMBL" id="DP000009">
    <property type="protein sequence ID" value="ABF94943.1"/>
    <property type="molecule type" value="Genomic_DNA"/>
</dbReference>
<dbReference type="EMBL" id="AP008209">
    <property type="protein sequence ID" value="BAF11455.1"/>
    <property type="molecule type" value="Genomic_DNA"/>
</dbReference>
<dbReference type="EMBL" id="AP014959">
    <property type="protein sequence ID" value="BAS83241.1"/>
    <property type="molecule type" value="Genomic_DNA"/>
</dbReference>
<dbReference type="EMBL" id="CM000140">
    <property type="protein sequence ID" value="EEE58686.1"/>
    <property type="molecule type" value="Genomic_DNA"/>
</dbReference>
<dbReference type="EMBL" id="AK063618">
    <property type="protein sequence ID" value="BAG88793.1"/>
    <property type="molecule type" value="mRNA"/>
</dbReference>
<dbReference type="EMBL" id="AK120045">
    <property type="protein sequence ID" value="BAG99851.1"/>
    <property type="molecule type" value="mRNA"/>
</dbReference>
<dbReference type="EMBL" id="AK120048">
    <property type="protein sequence ID" value="BAG99853.1"/>
    <property type="molecule type" value="mRNA"/>
</dbReference>
<dbReference type="RefSeq" id="XP_015628759.1">
    <property type="nucleotide sequence ID" value="XM_015773273.1"/>
</dbReference>
<dbReference type="SMR" id="Q10P60"/>
<dbReference type="BioGRID" id="801274">
    <property type="interactions" value="1"/>
</dbReference>
<dbReference type="FunCoup" id="Q10P60">
    <property type="interactions" value="186"/>
</dbReference>
<dbReference type="STRING" id="39947.Q10P60"/>
<dbReference type="CarbonylDB" id="Q10P60"/>
<dbReference type="PaxDb" id="39947-Q10P60"/>
<dbReference type="EnsemblPlants" id="Os03t0245800-02">
    <property type="protein sequence ID" value="Os03t0245800-02"/>
    <property type="gene ID" value="Os03g0245800"/>
</dbReference>
<dbReference type="Gramene" id="Os03t0245800-02">
    <property type="protein sequence ID" value="Os03t0245800-02"/>
    <property type="gene ID" value="Os03g0245800"/>
</dbReference>
<dbReference type="KEGG" id="dosa:Os03g0245800"/>
<dbReference type="eggNOG" id="KOG0710">
    <property type="taxonomic scope" value="Eukaryota"/>
</dbReference>
<dbReference type="HOGENOM" id="CLU_046737_3_0_1"/>
<dbReference type="InParanoid" id="Q10P60"/>
<dbReference type="OMA" id="TMRQMMD"/>
<dbReference type="OrthoDB" id="1431247at2759"/>
<dbReference type="Proteomes" id="UP000000763">
    <property type="component" value="Chromosome 3"/>
</dbReference>
<dbReference type="Proteomes" id="UP000007752">
    <property type="component" value="Chromosome 3"/>
</dbReference>
<dbReference type="Proteomes" id="UP000059680">
    <property type="component" value="Chromosome 3"/>
</dbReference>
<dbReference type="GO" id="GO:0009507">
    <property type="term" value="C:chloroplast"/>
    <property type="evidence" value="ECO:0007669"/>
    <property type="project" value="UniProtKB-SubCell"/>
</dbReference>
<dbReference type="GO" id="GO:0009408">
    <property type="term" value="P:response to heat"/>
    <property type="evidence" value="ECO:0000270"/>
    <property type="project" value="UniProtKB"/>
</dbReference>
<dbReference type="CDD" id="cd06464">
    <property type="entry name" value="ACD_sHsps-like"/>
    <property type="match status" value="1"/>
</dbReference>
<dbReference type="FunFam" id="2.60.40.790:FF:000059">
    <property type="entry name" value="26.5 kDa heat shock protein, mitochondrial"/>
    <property type="match status" value="1"/>
</dbReference>
<dbReference type="Gene3D" id="2.60.40.790">
    <property type="match status" value="1"/>
</dbReference>
<dbReference type="InterPro" id="IPR002068">
    <property type="entry name" value="A-crystallin/Hsp20_dom"/>
</dbReference>
<dbReference type="InterPro" id="IPR008978">
    <property type="entry name" value="HSP20-like_chaperone"/>
</dbReference>
<dbReference type="InterPro" id="IPR044587">
    <property type="entry name" value="HSP21-like"/>
</dbReference>
<dbReference type="PANTHER" id="PTHR46733">
    <property type="entry name" value="26.5 KDA HEAT SHOCK PROTEIN, MITOCHONDRIAL"/>
    <property type="match status" value="1"/>
</dbReference>
<dbReference type="PANTHER" id="PTHR46733:SF4">
    <property type="entry name" value="HEAT SHOCK PROTEIN 21, CHLOROPLASTIC"/>
    <property type="match status" value="1"/>
</dbReference>
<dbReference type="Pfam" id="PF00011">
    <property type="entry name" value="HSP20"/>
    <property type="match status" value="1"/>
</dbReference>
<dbReference type="SUPFAM" id="SSF49764">
    <property type="entry name" value="HSP20-like chaperones"/>
    <property type="match status" value="1"/>
</dbReference>
<dbReference type="PROSITE" id="PS01031">
    <property type="entry name" value="SHSP"/>
    <property type="match status" value="1"/>
</dbReference>